<gene>
    <name evidence="1" type="primary">gloB</name>
    <name type="ordered locus">c0249</name>
</gene>
<comment type="function">
    <text evidence="1">Thiolesterase that catalyzes the hydrolysis of S-D-lactoyl-glutathione to form glutathione and D-lactic acid.</text>
</comment>
<comment type="catalytic activity">
    <reaction evidence="1">
        <text>an S-(2-hydroxyacyl)glutathione + H2O = a 2-hydroxy carboxylate + glutathione + H(+)</text>
        <dbReference type="Rhea" id="RHEA:21864"/>
        <dbReference type="ChEBI" id="CHEBI:15377"/>
        <dbReference type="ChEBI" id="CHEBI:15378"/>
        <dbReference type="ChEBI" id="CHEBI:57925"/>
        <dbReference type="ChEBI" id="CHEBI:58896"/>
        <dbReference type="ChEBI" id="CHEBI:71261"/>
        <dbReference type="EC" id="3.1.2.6"/>
    </reaction>
</comment>
<comment type="cofactor">
    <cofactor evidence="1">
        <name>Zn(2+)</name>
        <dbReference type="ChEBI" id="CHEBI:29105"/>
    </cofactor>
    <text evidence="1">Binds 2 Zn(2+) ions per subunit.</text>
</comment>
<comment type="pathway">
    <text evidence="1">Secondary metabolite metabolism; methylglyoxal degradation; (R)-lactate from methylglyoxal: step 2/2.</text>
</comment>
<comment type="subunit">
    <text evidence="1">Monomer.</text>
</comment>
<comment type="similarity">
    <text evidence="1">Belongs to the metallo-beta-lactamase superfamily. Glyoxalase II family.</text>
</comment>
<proteinExistence type="inferred from homology"/>
<keyword id="KW-0378">Hydrolase</keyword>
<keyword id="KW-0479">Metal-binding</keyword>
<keyword id="KW-1185">Reference proteome</keyword>
<keyword id="KW-0862">Zinc</keyword>
<organism>
    <name type="scientific">Escherichia coli O6:H1 (strain CFT073 / ATCC 700928 / UPEC)</name>
    <dbReference type="NCBI Taxonomy" id="199310"/>
    <lineage>
        <taxon>Bacteria</taxon>
        <taxon>Pseudomonadati</taxon>
        <taxon>Pseudomonadota</taxon>
        <taxon>Gammaproteobacteria</taxon>
        <taxon>Enterobacterales</taxon>
        <taxon>Enterobacteriaceae</taxon>
        <taxon>Escherichia</taxon>
    </lineage>
</organism>
<feature type="chain" id="PRO_0000309639" description="Hydroxyacylglutathione hydrolase">
    <location>
        <begin position="1"/>
        <end position="251"/>
    </location>
</feature>
<feature type="binding site" evidence="1">
    <location>
        <position position="53"/>
    </location>
    <ligand>
        <name>Zn(2+)</name>
        <dbReference type="ChEBI" id="CHEBI:29105"/>
        <label>1</label>
    </ligand>
</feature>
<feature type="binding site" evidence="1">
    <location>
        <position position="55"/>
    </location>
    <ligand>
        <name>Zn(2+)</name>
        <dbReference type="ChEBI" id="CHEBI:29105"/>
        <label>1</label>
    </ligand>
</feature>
<feature type="binding site" evidence="1">
    <location>
        <position position="57"/>
    </location>
    <ligand>
        <name>Zn(2+)</name>
        <dbReference type="ChEBI" id="CHEBI:29105"/>
        <label>2</label>
    </ligand>
</feature>
<feature type="binding site" evidence="1">
    <location>
        <position position="58"/>
    </location>
    <ligand>
        <name>Zn(2+)</name>
        <dbReference type="ChEBI" id="CHEBI:29105"/>
        <label>2</label>
    </ligand>
</feature>
<feature type="binding site" evidence="1">
    <location>
        <position position="110"/>
    </location>
    <ligand>
        <name>Zn(2+)</name>
        <dbReference type="ChEBI" id="CHEBI:29105"/>
        <label>1</label>
    </ligand>
</feature>
<feature type="binding site" evidence="1">
    <location>
        <position position="127"/>
    </location>
    <ligand>
        <name>Zn(2+)</name>
        <dbReference type="ChEBI" id="CHEBI:29105"/>
        <label>1</label>
    </ligand>
</feature>
<feature type="binding site" evidence="1">
    <location>
        <position position="127"/>
    </location>
    <ligand>
        <name>Zn(2+)</name>
        <dbReference type="ChEBI" id="CHEBI:29105"/>
        <label>2</label>
    </ligand>
</feature>
<feature type="binding site" evidence="1">
    <location>
        <position position="165"/>
    </location>
    <ligand>
        <name>Zn(2+)</name>
        <dbReference type="ChEBI" id="CHEBI:29105"/>
        <label>2</label>
    </ligand>
</feature>
<sequence length="251" mass="28490">MNLNSIPAFDDNYIWVLNDEAGRCLIVDPGDAEPVLNAIAANNWQPEAIFLTHHHHDHVGGVKELVKKFPQIVVYGPQETQDKGTTQVVKDSETAFVLGHEFSVIATPGHTLGHICYFSKPYLFCGDTLFSGGCGRLFEGTPSQMYQSIKKLSALPDDTLVCCAHEYTLSNMKFALSILPHDLSINDYYRKVKELRAKNQITLPVILKNERQINVFLRTEDIDLINVINEETLLQQPEERFAWLRSKKDRF</sequence>
<accession>Q8FKY7</accession>
<dbReference type="EC" id="3.1.2.6" evidence="1"/>
<dbReference type="EMBL" id="AE014075">
    <property type="protein sequence ID" value="AAN78739.1"/>
    <property type="molecule type" value="Genomic_DNA"/>
</dbReference>
<dbReference type="RefSeq" id="WP_001052734.1">
    <property type="nucleotide sequence ID" value="NC_004431.1"/>
</dbReference>
<dbReference type="SMR" id="Q8FKY7"/>
<dbReference type="STRING" id="199310.c0249"/>
<dbReference type="KEGG" id="ecc:c0249"/>
<dbReference type="eggNOG" id="COG0491">
    <property type="taxonomic scope" value="Bacteria"/>
</dbReference>
<dbReference type="HOGENOM" id="CLU_030571_4_1_6"/>
<dbReference type="BioCyc" id="ECOL199310:C0249-MONOMER"/>
<dbReference type="UniPathway" id="UPA00619">
    <property type="reaction ID" value="UER00676"/>
</dbReference>
<dbReference type="Proteomes" id="UP000001410">
    <property type="component" value="Chromosome"/>
</dbReference>
<dbReference type="GO" id="GO:0004416">
    <property type="term" value="F:hydroxyacylglutathione hydrolase activity"/>
    <property type="evidence" value="ECO:0007669"/>
    <property type="project" value="UniProtKB-UniRule"/>
</dbReference>
<dbReference type="GO" id="GO:0046872">
    <property type="term" value="F:metal ion binding"/>
    <property type="evidence" value="ECO:0007669"/>
    <property type="project" value="UniProtKB-KW"/>
</dbReference>
<dbReference type="GO" id="GO:0019243">
    <property type="term" value="P:methylglyoxal catabolic process to D-lactate via S-lactoyl-glutathione"/>
    <property type="evidence" value="ECO:0007669"/>
    <property type="project" value="InterPro"/>
</dbReference>
<dbReference type="CDD" id="cd07723">
    <property type="entry name" value="hydroxyacylglutathione_hydrolase_MBL-fold"/>
    <property type="match status" value="1"/>
</dbReference>
<dbReference type="FunFam" id="3.60.15.10:FF:000012">
    <property type="entry name" value="Hydroxyacylglutathione hydrolase"/>
    <property type="match status" value="1"/>
</dbReference>
<dbReference type="Gene3D" id="3.60.15.10">
    <property type="entry name" value="Ribonuclease Z/Hydroxyacylglutathione hydrolase-like"/>
    <property type="match status" value="1"/>
</dbReference>
<dbReference type="HAMAP" id="MF_01374">
    <property type="entry name" value="Glyoxalase_2"/>
    <property type="match status" value="1"/>
</dbReference>
<dbReference type="InterPro" id="IPR035680">
    <property type="entry name" value="Clx_II_MBL"/>
</dbReference>
<dbReference type="InterPro" id="IPR050110">
    <property type="entry name" value="Glyoxalase_II_hydrolase"/>
</dbReference>
<dbReference type="InterPro" id="IPR032282">
    <property type="entry name" value="HAGH_C"/>
</dbReference>
<dbReference type="InterPro" id="IPR017782">
    <property type="entry name" value="Hydroxyacylglutathione_Hdrlase"/>
</dbReference>
<dbReference type="InterPro" id="IPR001279">
    <property type="entry name" value="Metallo-B-lactamas"/>
</dbReference>
<dbReference type="InterPro" id="IPR036866">
    <property type="entry name" value="RibonucZ/Hydroxyglut_hydro"/>
</dbReference>
<dbReference type="NCBIfam" id="TIGR03413">
    <property type="entry name" value="GSH_gloB"/>
    <property type="match status" value="1"/>
</dbReference>
<dbReference type="NCBIfam" id="NF007597">
    <property type="entry name" value="PRK10241.1"/>
    <property type="match status" value="1"/>
</dbReference>
<dbReference type="PANTHER" id="PTHR43705">
    <property type="entry name" value="HYDROXYACYLGLUTATHIONE HYDROLASE"/>
    <property type="match status" value="1"/>
</dbReference>
<dbReference type="PANTHER" id="PTHR43705:SF1">
    <property type="entry name" value="HYDROXYACYLGLUTATHIONE HYDROLASE GLOB"/>
    <property type="match status" value="1"/>
</dbReference>
<dbReference type="Pfam" id="PF16123">
    <property type="entry name" value="HAGH_C"/>
    <property type="match status" value="1"/>
</dbReference>
<dbReference type="Pfam" id="PF00753">
    <property type="entry name" value="Lactamase_B"/>
    <property type="match status" value="1"/>
</dbReference>
<dbReference type="PIRSF" id="PIRSF005457">
    <property type="entry name" value="Glx"/>
    <property type="match status" value="1"/>
</dbReference>
<dbReference type="SMART" id="SM00849">
    <property type="entry name" value="Lactamase_B"/>
    <property type="match status" value="1"/>
</dbReference>
<dbReference type="SUPFAM" id="SSF56281">
    <property type="entry name" value="Metallo-hydrolase/oxidoreductase"/>
    <property type="match status" value="1"/>
</dbReference>
<reference key="1">
    <citation type="journal article" date="2002" name="Proc. Natl. Acad. Sci. U.S.A.">
        <title>Extensive mosaic structure revealed by the complete genome sequence of uropathogenic Escherichia coli.</title>
        <authorList>
            <person name="Welch R.A."/>
            <person name="Burland V."/>
            <person name="Plunkett G. III"/>
            <person name="Redford P."/>
            <person name="Roesch P."/>
            <person name="Rasko D."/>
            <person name="Buckles E.L."/>
            <person name="Liou S.-R."/>
            <person name="Boutin A."/>
            <person name="Hackett J."/>
            <person name="Stroud D."/>
            <person name="Mayhew G.F."/>
            <person name="Rose D.J."/>
            <person name="Zhou S."/>
            <person name="Schwartz D.C."/>
            <person name="Perna N.T."/>
            <person name="Mobley H.L.T."/>
            <person name="Donnenberg M.S."/>
            <person name="Blattner F.R."/>
        </authorList>
    </citation>
    <scope>NUCLEOTIDE SEQUENCE [LARGE SCALE GENOMIC DNA]</scope>
    <source>
        <strain>CFT073 / ATCC 700928 / UPEC</strain>
    </source>
</reference>
<evidence type="ECO:0000255" key="1">
    <source>
        <dbReference type="HAMAP-Rule" id="MF_01374"/>
    </source>
</evidence>
<protein>
    <recommendedName>
        <fullName evidence="1">Hydroxyacylglutathione hydrolase</fullName>
        <ecNumber evidence="1">3.1.2.6</ecNumber>
    </recommendedName>
    <alternativeName>
        <fullName evidence="1">Glyoxalase II</fullName>
        <shortName evidence="1">Glx II</shortName>
    </alternativeName>
</protein>
<name>GLO2_ECOL6</name>